<proteinExistence type="inferred from homology"/>
<accession>Q4JSV7</accession>
<organism>
    <name type="scientific">Corynebacterium jeikeium (strain K411)</name>
    <dbReference type="NCBI Taxonomy" id="306537"/>
    <lineage>
        <taxon>Bacteria</taxon>
        <taxon>Bacillati</taxon>
        <taxon>Actinomycetota</taxon>
        <taxon>Actinomycetes</taxon>
        <taxon>Mycobacteriales</taxon>
        <taxon>Corynebacteriaceae</taxon>
        <taxon>Corynebacterium</taxon>
    </lineage>
</organism>
<feature type="chain" id="PRO_0000224678" description="UDP-N-acetylenolpyruvoylglucosamine reductase">
    <location>
        <begin position="1"/>
        <end position="434"/>
    </location>
</feature>
<feature type="domain" description="FAD-binding PCMH-type" evidence="1">
    <location>
        <begin position="51"/>
        <end position="238"/>
    </location>
</feature>
<feature type="active site" evidence="1">
    <location>
        <position position="216"/>
    </location>
</feature>
<feature type="active site" description="Proton donor" evidence="1">
    <location>
        <position position="299"/>
    </location>
</feature>
<feature type="active site" evidence="1">
    <location>
        <position position="425"/>
    </location>
</feature>
<keyword id="KW-0131">Cell cycle</keyword>
<keyword id="KW-0132">Cell division</keyword>
<keyword id="KW-0133">Cell shape</keyword>
<keyword id="KW-0961">Cell wall biogenesis/degradation</keyword>
<keyword id="KW-0963">Cytoplasm</keyword>
<keyword id="KW-0274">FAD</keyword>
<keyword id="KW-0285">Flavoprotein</keyword>
<keyword id="KW-0521">NADP</keyword>
<keyword id="KW-0560">Oxidoreductase</keyword>
<keyword id="KW-0573">Peptidoglycan synthesis</keyword>
<keyword id="KW-1185">Reference proteome</keyword>
<reference key="1">
    <citation type="journal article" date="2005" name="J. Bacteriol.">
        <title>Complete genome sequence and analysis of the multiresistant nosocomial pathogen Corynebacterium jeikeium K411, a lipid-requiring bacterium of the human skin flora.</title>
        <authorList>
            <person name="Tauch A."/>
            <person name="Kaiser O."/>
            <person name="Hain T."/>
            <person name="Goesmann A."/>
            <person name="Weisshaar B."/>
            <person name="Albersmeier A."/>
            <person name="Bekel T."/>
            <person name="Bischoff N."/>
            <person name="Brune I."/>
            <person name="Chakraborty T."/>
            <person name="Kalinowski J."/>
            <person name="Meyer F."/>
            <person name="Rupp O."/>
            <person name="Schneiker S."/>
            <person name="Viehoever P."/>
            <person name="Puehler A."/>
        </authorList>
    </citation>
    <scope>NUCLEOTIDE SEQUENCE [LARGE SCALE GENOMIC DNA]</scope>
    <source>
        <strain>K411</strain>
    </source>
</reference>
<comment type="function">
    <text evidence="1">Cell wall formation.</text>
</comment>
<comment type="catalytic activity">
    <reaction evidence="1">
        <text>UDP-N-acetyl-alpha-D-muramate + NADP(+) = UDP-N-acetyl-3-O-(1-carboxyvinyl)-alpha-D-glucosamine + NADPH + H(+)</text>
        <dbReference type="Rhea" id="RHEA:12248"/>
        <dbReference type="ChEBI" id="CHEBI:15378"/>
        <dbReference type="ChEBI" id="CHEBI:57783"/>
        <dbReference type="ChEBI" id="CHEBI:58349"/>
        <dbReference type="ChEBI" id="CHEBI:68483"/>
        <dbReference type="ChEBI" id="CHEBI:70757"/>
        <dbReference type="EC" id="1.3.1.98"/>
    </reaction>
</comment>
<comment type="cofactor">
    <cofactor evidence="1">
        <name>FAD</name>
        <dbReference type="ChEBI" id="CHEBI:57692"/>
    </cofactor>
</comment>
<comment type="pathway">
    <text evidence="1">Cell wall biogenesis; peptidoglycan biosynthesis.</text>
</comment>
<comment type="subcellular location">
    <subcellularLocation>
        <location evidence="1">Cytoplasm</location>
    </subcellularLocation>
</comment>
<comment type="similarity">
    <text evidence="1">Belongs to the MurB family.</text>
</comment>
<sequence length="434" mass="45174">MTDSTNNAHFTSEERARHLLERLSGTGADSVSIPGTRVTSRSFAEMTTLRIGAAPAGVVECSSAEAVAQVVSFLDAHTQPLLIVGGGSNLVVGEGDEVSQLVVVLMSAGGGEGGVDKKGAAEKSAEGDVMIDRETGVVRAFAGVEWDQLVAATVEAGLGGLECLSGIPGSVGATPVQNVGAYGAEVAQVLRRVQLYDRTRGELEWVDPSALDLGYRYSNLKFTSRAVVTAVEFQLTTDGLSVPLRFGELARRLGVDADEAAAGEIRRPATDVRQAVLELRAGKGMVLDSADHDTWSAGSFFTNPIVTGEEARDAVVAAVREKCGDAEAESMPLYSVKSSGGDASGGGAGASVGEPQYKFSAAWLIERAGFAKGWHVPGNERASLSTKHTLALTNRGSATSADVVELARAVRTGVREAFGVVLEPEPIWVGVSID</sequence>
<gene>
    <name evidence="1" type="primary">murB</name>
    <name type="ordered locus">jk1919</name>
</gene>
<protein>
    <recommendedName>
        <fullName evidence="1">UDP-N-acetylenolpyruvoylglucosamine reductase</fullName>
        <ecNumber evidence="1">1.3.1.98</ecNumber>
    </recommendedName>
    <alternativeName>
        <fullName evidence="1">UDP-N-acetylmuramate dehydrogenase</fullName>
    </alternativeName>
</protein>
<name>MURB_CORJK</name>
<evidence type="ECO:0000255" key="1">
    <source>
        <dbReference type="HAMAP-Rule" id="MF_00037"/>
    </source>
</evidence>
<dbReference type="EC" id="1.3.1.98" evidence="1"/>
<dbReference type="EMBL" id="CR931997">
    <property type="protein sequence ID" value="CAI38100.1"/>
    <property type="molecule type" value="Genomic_DNA"/>
</dbReference>
<dbReference type="RefSeq" id="WP_011274220.1">
    <property type="nucleotide sequence ID" value="NC_007164.1"/>
</dbReference>
<dbReference type="SMR" id="Q4JSV7"/>
<dbReference type="STRING" id="306537.jk1919"/>
<dbReference type="GeneID" id="92739548"/>
<dbReference type="KEGG" id="cjk:jk1919"/>
<dbReference type="PATRIC" id="fig|306537.10.peg.1947"/>
<dbReference type="eggNOG" id="COG0812">
    <property type="taxonomic scope" value="Bacteria"/>
</dbReference>
<dbReference type="HOGENOM" id="CLU_035304_0_1_11"/>
<dbReference type="OrthoDB" id="9804753at2"/>
<dbReference type="UniPathway" id="UPA00219"/>
<dbReference type="Proteomes" id="UP000000545">
    <property type="component" value="Chromosome"/>
</dbReference>
<dbReference type="GO" id="GO:0005829">
    <property type="term" value="C:cytosol"/>
    <property type="evidence" value="ECO:0007669"/>
    <property type="project" value="TreeGrafter"/>
</dbReference>
<dbReference type="GO" id="GO:0071949">
    <property type="term" value="F:FAD binding"/>
    <property type="evidence" value="ECO:0007669"/>
    <property type="project" value="InterPro"/>
</dbReference>
<dbReference type="GO" id="GO:0008762">
    <property type="term" value="F:UDP-N-acetylmuramate dehydrogenase activity"/>
    <property type="evidence" value="ECO:0007669"/>
    <property type="project" value="UniProtKB-UniRule"/>
</dbReference>
<dbReference type="GO" id="GO:0051301">
    <property type="term" value="P:cell division"/>
    <property type="evidence" value="ECO:0007669"/>
    <property type="project" value="UniProtKB-KW"/>
</dbReference>
<dbReference type="GO" id="GO:0071555">
    <property type="term" value="P:cell wall organization"/>
    <property type="evidence" value="ECO:0007669"/>
    <property type="project" value="UniProtKB-KW"/>
</dbReference>
<dbReference type="GO" id="GO:0009252">
    <property type="term" value="P:peptidoglycan biosynthetic process"/>
    <property type="evidence" value="ECO:0007669"/>
    <property type="project" value="UniProtKB-UniRule"/>
</dbReference>
<dbReference type="GO" id="GO:0008360">
    <property type="term" value="P:regulation of cell shape"/>
    <property type="evidence" value="ECO:0007669"/>
    <property type="project" value="UniProtKB-KW"/>
</dbReference>
<dbReference type="Gene3D" id="3.30.465.10">
    <property type="match status" value="1"/>
</dbReference>
<dbReference type="Gene3D" id="3.90.78.10">
    <property type="entry name" value="UDP-N-acetylenolpyruvoylglucosamine reductase, C-terminal domain"/>
    <property type="match status" value="1"/>
</dbReference>
<dbReference type="Gene3D" id="3.30.43.10">
    <property type="entry name" value="Uridine Diphospho-n-acetylenolpyruvylglucosamine Reductase, domain 2"/>
    <property type="match status" value="1"/>
</dbReference>
<dbReference type="HAMAP" id="MF_00037">
    <property type="entry name" value="MurB"/>
    <property type="match status" value="1"/>
</dbReference>
<dbReference type="InterPro" id="IPR016166">
    <property type="entry name" value="FAD-bd_PCMH"/>
</dbReference>
<dbReference type="InterPro" id="IPR036318">
    <property type="entry name" value="FAD-bd_PCMH-like_sf"/>
</dbReference>
<dbReference type="InterPro" id="IPR016167">
    <property type="entry name" value="FAD-bd_PCMH_sub1"/>
</dbReference>
<dbReference type="InterPro" id="IPR016169">
    <property type="entry name" value="FAD-bd_PCMH_sub2"/>
</dbReference>
<dbReference type="InterPro" id="IPR003170">
    <property type="entry name" value="MurB"/>
</dbReference>
<dbReference type="InterPro" id="IPR011601">
    <property type="entry name" value="MurB_C"/>
</dbReference>
<dbReference type="InterPro" id="IPR036635">
    <property type="entry name" value="MurB_C_sf"/>
</dbReference>
<dbReference type="InterPro" id="IPR006094">
    <property type="entry name" value="Oxid_FAD_bind_N"/>
</dbReference>
<dbReference type="NCBIfam" id="NF010478">
    <property type="entry name" value="PRK13903.1"/>
    <property type="match status" value="1"/>
</dbReference>
<dbReference type="PANTHER" id="PTHR21071">
    <property type="entry name" value="UDP-N-ACETYLENOLPYRUVOYLGLUCOSAMINE REDUCTASE"/>
    <property type="match status" value="1"/>
</dbReference>
<dbReference type="PANTHER" id="PTHR21071:SF4">
    <property type="entry name" value="UDP-N-ACETYLENOLPYRUVOYLGLUCOSAMINE REDUCTASE"/>
    <property type="match status" value="1"/>
</dbReference>
<dbReference type="Pfam" id="PF01565">
    <property type="entry name" value="FAD_binding_4"/>
    <property type="match status" value="1"/>
</dbReference>
<dbReference type="Pfam" id="PF02873">
    <property type="entry name" value="MurB_C"/>
    <property type="match status" value="1"/>
</dbReference>
<dbReference type="SUPFAM" id="SSF56176">
    <property type="entry name" value="FAD-binding/transporter-associated domain-like"/>
    <property type="match status" value="1"/>
</dbReference>
<dbReference type="SUPFAM" id="SSF56194">
    <property type="entry name" value="Uridine diphospho-N-Acetylenolpyruvylglucosamine reductase, MurB, C-terminal domain"/>
    <property type="match status" value="1"/>
</dbReference>
<dbReference type="PROSITE" id="PS51387">
    <property type="entry name" value="FAD_PCMH"/>
    <property type="match status" value="1"/>
</dbReference>